<evidence type="ECO:0000255" key="1">
    <source>
        <dbReference type="HAMAP-Rule" id="MF_03010"/>
    </source>
</evidence>
<evidence type="ECO:0000255" key="2">
    <source>
        <dbReference type="PROSITE-ProRule" id="PRU01185"/>
    </source>
</evidence>
<evidence type="ECO:0000312" key="3">
    <source>
        <dbReference type="WormBase" id="CBG09495"/>
    </source>
</evidence>
<comment type="function">
    <text evidence="1">Component of the eukaryotic translation initiation factor 3 (eIF-3) complex, which is involved in protein synthesis of a specialized repertoire of mRNAs and, together with other initiation factors, stimulates binding of mRNA and methionyl-tRNAi to the 40S ribosome. The eIF-3 complex specifically targets and initiates translation of a subset of mRNAs involved in cell proliferation.</text>
</comment>
<comment type="subunit">
    <text evidence="1">Component of the eukaryotic translation initiation factor 3 (eIF-3) complex.</text>
</comment>
<comment type="subcellular location">
    <subcellularLocation>
        <location evidence="1">Cytoplasm</location>
    </subcellularLocation>
</comment>
<comment type="similarity">
    <text evidence="1">Belongs to the eIF-3 subunit K family.</text>
</comment>
<proteinExistence type="inferred from homology"/>
<reference key="1">
    <citation type="journal article" date="2003" name="PLoS Biol.">
        <title>The genome sequence of Caenorhabditis briggsae: a platform for comparative genomics.</title>
        <authorList>
            <person name="Stein L.D."/>
            <person name="Bao Z."/>
            <person name="Blasiar D."/>
            <person name="Blumenthal T."/>
            <person name="Brent M.R."/>
            <person name="Chen N."/>
            <person name="Chinwalla A."/>
            <person name="Clarke L."/>
            <person name="Clee C."/>
            <person name="Coghlan A."/>
            <person name="Coulson A."/>
            <person name="D'Eustachio P."/>
            <person name="Fitch D.H.A."/>
            <person name="Fulton L.A."/>
            <person name="Fulton R.E."/>
            <person name="Griffiths-Jones S."/>
            <person name="Harris T.W."/>
            <person name="Hillier L.W."/>
            <person name="Kamath R."/>
            <person name="Kuwabara P.E."/>
            <person name="Mardis E.R."/>
            <person name="Marra M.A."/>
            <person name="Miner T.L."/>
            <person name="Minx P."/>
            <person name="Mullikin J.C."/>
            <person name="Plumb R.W."/>
            <person name="Rogers J."/>
            <person name="Schein J.E."/>
            <person name="Sohrmann M."/>
            <person name="Spieth J."/>
            <person name="Stajich J.E."/>
            <person name="Wei C."/>
            <person name="Willey D."/>
            <person name="Wilson R.K."/>
            <person name="Durbin R.M."/>
            <person name="Waterston R.H."/>
        </authorList>
    </citation>
    <scope>NUCLEOTIDE SEQUENCE [LARGE SCALE GENOMIC DNA]</scope>
    <source>
        <strain>AF16</strain>
    </source>
</reference>
<gene>
    <name evidence="1 3" type="primary">eif-3.K</name>
    <name evidence="3" type="ORF">CBG09495</name>
</gene>
<sequence length="240" mass="27131">MSFERLQRDLHEAIEGVNRYNPENVAELAACVQAMVAENKYDKDIVLTILKLYQLNPERYDENVVRQVLLKTLMVLPSSDFALAKCLIDTNRIGSQELRRIFDLGAVLESCNFAVFWKLMKGTYKPTTNPNEPFKVPAEISKMIKPMAGFEDAIKHYACRVISVTFQNIEKKLLSSLLGGASDKEVTALAKKFGWETKENGEVFFVANHEGTIKTRNIDEKIQFSHVADLLTSNVPPLAF</sequence>
<protein>
    <recommendedName>
        <fullName evidence="1">Eukaryotic translation initiation factor 3 subunit K</fullName>
        <shortName evidence="1">eIF3k</shortName>
    </recommendedName>
    <alternativeName>
        <fullName evidence="1">eIF-3 p25</fullName>
    </alternativeName>
</protein>
<feature type="chain" id="PRO_0000123548" description="Eukaryotic translation initiation factor 3 subunit K">
    <location>
        <begin position="1"/>
        <end position="240"/>
    </location>
</feature>
<feature type="domain" description="PCI" evidence="2">
    <location>
        <begin position="41"/>
        <end position="221"/>
    </location>
</feature>
<name>EIF3K_CAEBR</name>
<accession>Q61K76</accession>
<accession>A8X8Z5</accession>
<keyword id="KW-0963">Cytoplasm</keyword>
<keyword id="KW-0396">Initiation factor</keyword>
<keyword id="KW-0648">Protein biosynthesis</keyword>
<keyword id="KW-1185">Reference proteome</keyword>
<dbReference type="EMBL" id="HE600998">
    <property type="protein sequence ID" value="CAP29106.1"/>
    <property type="molecule type" value="Genomic_DNA"/>
</dbReference>
<dbReference type="SMR" id="Q61K76"/>
<dbReference type="FunCoup" id="Q61K76">
    <property type="interactions" value="2218"/>
</dbReference>
<dbReference type="STRING" id="6238.Q61K76"/>
<dbReference type="EnsemblMetazoa" id="CBG09495.1">
    <property type="protein sequence ID" value="CBG09495.1"/>
    <property type="gene ID" value="WBGene00031063"/>
</dbReference>
<dbReference type="KEGG" id="cbr:CBG_09495"/>
<dbReference type="CTD" id="8578999"/>
<dbReference type="WormBase" id="CBG09495">
    <property type="protein sequence ID" value="CBP16600"/>
    <property type="gene ID" value="WBGene00031063"/>
    <property type="gene designation" value="Cbr-eif-3.K"/>
</dbReference>
<dbReference type="eggNOG" id="KOG3252">
    <property type="taxonomic scope" value="Eukaryota"/>
</dbReference>
<dbReference type="HOGENOM" id="CLU_076723_1_0_1"/>
<dbReference type="InParanoid" id="Q61K76"/>
<dbReference type="OMA" id="GDDLCAD"/>
<dbReference type="Proteomes" id="UP000008549">
    <property type="component" value="Unassembled WGS sequence"/>
</dbReference>
<dbReference type="GO" id="GO:0016282">
    <property type="term" value="C:eukaryotic 43S preinitiation complex"/>
    <property type="evidence" value="ECO:0007669"/>
    <property type="project" value="UniProtKB-UniRule"/>
</dbReference>
<dbReference type="GO" id="GO:0033290">
    <property type="term" value="C:eukaryotic 48S preinitiation complex"/>
    <property type="evidence" value="ECO:0007669"/>
    <property type="project" value="UniProtKB-UniRule"/>
</dbReference>
<dbReference type="GO" id="GO:0005852">
    <property type="term" value="C:eukaryotic translation initiation factor 3 complex"/>
    <property type="evidence" value="ECO:0000318"/>
    <property type="project" value="GO_Central"/>
</dbReference>
<dbReference type="GO" id="GO:0043022">
    <property type="term" value="F:ribosome binding"/>
    <property type="evidence" value="ECO:0007669"/>
    <property type="project" value="InterPro"/>
</dbReference>
<dbReference type="GO" id="GO:0003723">
    <property type="term" value="F:RNA binding"/>
    <property type="evidence" value="ECO:0007669"/>
    <property type="project" value="UniProtKB-UniRule"/>
</dbReference>
<dbReference type="GO" id="GO:0003743">
    <property type="term" value="F:translation initiation factor activity"/>
    <property type="evidence" value="ECO:0007669"/>
    <property type="project" value="UniProtKB-UniRule"/>
</dbReference>
<dbReference type="GO" id="GO:0001732">
    <property type="term" value="P:formation of cytoplasmic translation initiation complex"/>
    <property type="evidence" value="ECO:0007669"/>
    <property type="project" value="UniProtKB-UniRule"/>
</dbReference>
<dbReference type="GO" id="GO:0043065">
    <property type="term" value="P:positive regulation of apoptotic process"/>
    <property type="evidence" value="ECO:0007669"/>
    <property type="project" value="EnsemblMetazoa"/>
</dbReference>
<dbReference type="GO" id="GO:0006446">
    <property type="term" value="P:regulation of translational initiation"/>
    <property type="evidence" value="ECO:0007669"/>
    <property type="project" value="InterPro"/>
</dbReference>
<dbReference type="FunFam" id="1.10.10.10:FF:000212">
    <property type="entry name" value="Eukaryotic translation initiation factor 3 subunit K"/>
    <property type="match status" value="1"/>
</dbReference>
<dbReference type="FunFam" id="1.25.40.250:FF:000008">
    <property type="entry name" value="Eukaryotic translation initiation factor 3 subunit K"/>
    <property type="match status" value="1"/>
</dbReference>
<dbReference type="Gene3D" id="1.25.40.250">
    <property type="entry name" value="ARM repeat, domain 1"/>
    <property type="match status" value="1"/>
</dbReference>
<dbReference type="Gene3D" id="1.10.10.10">
    <property type="entry name" value="Winged helix-like DNA-binding domain superfamily/Winged helix DNA-binding domain"/>
    <property type="match status" value="1"/>
</dbReference>
<dbReference type="HAMAP" id="MF_03010">
    <property type="entry name" value="eIF3k"/>
    <property type="match status" value="1"/>
</dbReference>
<dbReference type="InterPro" id="IPR016024">
    <property type="entry name" value="ARM-type_fold"/>
</dbReference>
<dbReference type="InterPro" id="IPR033464">
    <property type="entry name" value="CSN8_PSD8_EIF3K"/>
</dbReference>
<dbReference type="InterPro" id="IPR009374">
    <property type="entry name" value="eIF3k"/>
</dbReference>
<dbReference type="InterPro" id="IPR000717">
    <property type="entry name" value="PCI_dom"/>
</dbReference>
<dbReference type="InterPro" id="IPR016020">
    <property type="entry name" value="Transl_init_fac_sub12_N_euk"/>
</dbReference>
<dbReference type="InterPro" id="IPR036388">
    <property type="entry name" value="WH-like_DNA-bd_sf"/>
</dbReference>
<dbReference type="InterPro" id="IPR036390">
    <property type="entry name" value="WH_DNA-bd_sf"/>
</dbReference>
<dbReference type="PANTHER" id="PTHR13022">
    <property type="entry name" value="EUKARYOTIC TRANSLATION INITIATION FACTOR 3 SUBUNIT 11"/>
    <property type="match status" value="1"/>
</dbReference>
<dbReference type="PANTHER" id="PTHR13022:SF0">
    <property type="entry name" value="EUKARYOTIC TRANSLATION INITIATION FACTOR 3 SUBUNIT K"/>
    <property type="match status" value="1"/>
</dbReference>
<dbReference type="Pfam" id="PF10075">
    <property type="entry name" value="CSN8_PSD8_EIF3K"/>
    <property type="match status" value="1"/>
</dbReference>
<dbReference type="SUPFAM" id="SSF48371">
    <property type="entry name" value="ARM repeat"/>
    <property type="match status" value="1"/>
</dbReference>
<dbReference type="SUPFAM" id="SSF46785">
    <property type="entry name" value="Winged helix' DNA-binding domain"/>
    <property type="match status" value="1"/>
</dbReference>
<dbReference type="PROSITE" id="PS50250">
    <property type="entry name" value="PCI"/>
    <property type="match status" value="1"/>
</dbReference>
<organism>
    <name type="scientific">Caenorhabditis briggsae</name>
    <dbReference type="NCBI Taxonomy" id="6238"/>
    <lineage>
        <taxon>Eukaryota</taxon>
        <taxon>Metazoa</taxon>
        <taxon>Ecdysozoa</taxon>
        <taxon>Nematoda</taxon>
        <taxon>Chromadorea</taxon>
        <taxon>Rhabditida</taxon>
        <taxon>Rhabditina</taxon>
        <taxon>Rhabditomorpha</taxon>
        <taxon>Rhabditoidea</taxon>
        <taxon>Rhabditidae</taxon>
        <taxon>Peloderinae</taxon>
        <taxon>Caenorhabditis</taxon>
    </lineage>
</organism>